<accession>Q9K5W7</accession>
<sequence>MGNDMIQVAGRPFSLESTTDFGRVERAILQQMLDSSEWFSYSSMNELRFELNVRINIMESAKEMNASQVTFTIFEHASCNPEYWTLTSTGGFLVRSDVRPSDAILDIYRNGTLYGFECATAIIIIYYQAILKSIGQLRFDSIFQHLYLYSWHTHPGLELHTFHADRFLPGDVVYFNNPDFHPDTPWFRGENAVVLSDGTFFGHGFGIMTAEQMIQSLNSYRFPGSMQPAYLANLITRISPLTIRNLLTLQSDRTTYHYSKAVIHHNLCSISSMDYQYYLLSLNG</sequence>
<protein>
    <recommendedName>
        <fullName evidence="1">Protein-glutamine gamma-glutamyltransferase</fullName>
        <ecNumber evidence="1">2.3.2.13</ecNumber>
    </recommendedName>
    <alternativeName>
        <fullName evidence="1">Transglutaminase</fullName>
        <shortName evidence="1">TGase</shortName>
    </alternativeName>
</protein>
<comment type="function">
    <text evidence="1">Probably plays a role in the assembly of the spore coat proteins by catalyzing epsilon-(gamma-glutamyl)lysine cross-links.</text>
</comment>
<comment type="catalytic activity">
    <reaction evidence="1">
        <text>L-glutaminyl-[protein] + L-lysyl-[protein] = [protein]-L-lysyl-N(6)-5-L-glutamyl-[protein] + NH4(+)</text>
        <dbReference type="Rhea" id="RHEA:54816"/>
        <dbReference type="Rhea" id="RHEA-COMP:9752"/>
        <dbReference type="Rhea" id="RHEA-COMP:10207"/>
        <dbReference type="Rhea" id="RHEA-COMP:14005"/>
        <dbReference type="ChEBI" id="CHEBI:28938"/>
        <dbReference type="ChEBI" id="CHEBI:29969"/>
        <dbReference type="ChEBI" id="CHEBI:30011"/>
        <dbReference type="ChEBI" id="CHEBI:138370"/>
        <dbReference type="EC" id="2.3.2.13"/>
    </reaction>
</comment>
<comment type="similarity">
    <text evidence="1">Belongs to the bacillus TGase family.</text>
</comment>
<gene>
    <name evidence="1" type="primary">tgl</name>
    <name type="ordered locus">BH3970</name>
</gene>
<evidence type="ECO:0000255" key="1">
    <source>
        <dbReference type="HAMAP-Rule" id="MF_00727"/>
    </source>
</evidence>
<dbReference type="EC" id="2.3.2.13" evidence="1"/>
<dbReference type="EMBL" id="BA000004">
    <property type="protein sequence ID" value="BAB07689.1"/>
    <property type="molecule type" value="Genomic_DNA"/>
</dbReference>
<dbReference type="PIR" id="B84146">
    <property type="entry name" value="B84146"/>
</dbReference>
<dbReference type="SMR" id="Q9K5W7"/>
<dbReference type="STRING" id="272558.gene:10729883"/>
<dbReference type="KEGG" id="bha:BH3970"/>
<dbReference type="eggNOG" id="ENOG502Z8C5">
    <property type="taxonomic scope" value="Bacteria"/>
</dbReference>
<dbReference type="HOGENOM" id="CLU_088922_0_0_9"/>
<dbReference type="OrthoDB" id="1845399at2"/>
<dbReference type="Proteomes" id="UP000001258">
    <property type="component" value="Chromosome"/>
</dbReference>
<dbReference type="GO" id="GO:0003810">
    <property type="term" value="F:protein-glutamine gamma-glutamyltransferase activity"/>
    <property type="evidence" value="ECO:0007669"/>
    <property type="project" value="UniProtKB-EC"/>
</dbReference>
<dbReference type="GO" id="GO:0030435">
    <property type="term" value="P:sporulation resulting in formation of a cellular spore"/>
    <property type="evidence" value="ECO:0007669"/>
    <property type="project" value="UniProtKB-KW"/>
</dbReference>
<dbReference type="HAMAP" id="MF_00727">
    <property type="entry name" value="Tgl"/>
    <property type="match status" value="1"/>
</dbReference>
<dbReference type="InterPro" id="IPR020916">
    <property type="entry name" value="Gln_gamma-glutamylTfrase_bac"/>
</dbReference>
<dbReference type="NCBIfam" id="NF002869">
    <property type="entry name" value="PRK03187.1"/>
    <property type="match status" value="1"/>
</dbReference>
<dbReference type="Pfam" id="PF20085">
    <property type="entry name" value="TGL"/>
    <property type="match status" value="1"/>
</dbReference>
<proteinExistence type="inferred from homology"/>
<reference key="1">
    <citation type="journal article" date="2000" name="Nucleic Acids Res.">
        <title>Complete genome sequence of the alkaliphilic bacterium Bacillus halodurans and genomic sequence comparison with Bacillus subtilis.</title>
        <authorList>
            <person name="Takami H."/>
            <person name="Nakasone K."/>
            <person name="Takaki Y."/>
            <person name="Maeno G."/>
            <person name="Sasaki R."/>
            <person name="Masui N."/>
            <person name="Fuji F."/>
            <person name="Hirama C."/>
            <person name="Nakamura Y."/>
            <person name="Ogasawara N."/>
            <person name="Kuhara S."/>
            <person name="Horikoshi K."/>
        </authorList>
    </citation>
    <scope>NUCLEOTIDE SEQUENCE [LARGE SCALE GENOMIC DNA]</scope>
    <source>
        <strain>ATCC BAA-125 / DSM 18197 / FERM 7344 / JCM 9153 / C-125</strain>
    </source>
</reference>
<keyword id="KW-0012">Acyltransferase</keyword>
<keyword id="KW-1185">Reference proteome</keyword>
<keyword id="KW-0749">Sporulation</keyword>
<keyword id="KW-0808">Transferase</keyword>
<feature type="chain" id="PRO_0000213724" description="Protein-glutamine gamma-glutamyltransferase">
    <location>
        <begin position="1"/>
        <end position="284"/>
    </location>
</feature>
<organism>
    <name type="scientific">Halalkalibacterium halodurans (strain ATCC BAA-125 / DSM 18197 / FERM 7344 / JCM 9153 / C-125)</name>
    <name type="common">Bacillus halodurans</name>
    <dbReference type="NCBI Taxonomy" id="272558"/>
    <lineage>
        <taxon>Bacteria</taxon>
        <taxon>Bacillati</taxon>
        <taxon>Bacillota</taxon>
        <taxon>Bacilli</taxon>
        <taxon>Bacillales</taxon>
        <taxon>Bacillaceae</taxon>
        <taxon>Halalkalibacterium (ex Joshi et al. 2022)</taxon>
    </lineage>
</organism>
<name>TGL_HALH5</name>